<sequence>MLNPIVRKFQYGQHTVTLETGMMARQATAAVMVSMDDTAVFVTVVGQKKAKPGQDFFPLTVNYQERTYAAGRIPGSFFRREGRPSEGETLIARLIDRPIRPLFPEGFVNEVQVIATVVSVNPQVNPDIVAMIGASAALSLSGIPFNGPIGAARVGYINDQYVLNPTQDELKESKLDLVVAGTEAAVLMVESEAELLSEDQMLGAVVFGHEQQQVVIQNINELVKEAGKPRWDWQPEPVNEALNARVAALAEARLSDAYRITDKQERYAQVDVIKSETIATLLAEDETLDENELGEILHAIEKNVVRSRVLAGEPRIDGREKDMIRGLDVRTGVLPRTHGSALFTRGETQALVTATLGTARDAQVLDELMGERTDTFLFHYNFPPYSVGETGMVGSPKRREIGHGRLAKRGVLAVMPDMDKFPYTVRVVSEITESNGSSSMASVCGASLALMDAGVPIKAAVAGIAMGLVKEGDNYVVLSDILGDEDHLGDMDFKVAGSRDGISALQMDIKIEGITKEIMQVALNQAKGARLHILGVMEQAINAPRGDISEFAPRIHTIKINPDKIKDVIGKGGSVIRALTEETGTTIEIEDDGTVKIAATDGEKAKHAIRRIEEITAEIEVGRVYTGKVTRIVDFGAFVAIGGGKEGLVHISQIADKRVEKVTDYLQMGQEVPVKVLEVDRQGRIRLSIKEATEQSQPAAAPEAPAAEQGE</sequence>
<evidence type="ECO:0000255" key="1">
    <source>
        <dbReference type="HAMAP-Rule" id="MF_01595"/>
    </source>
</evidence>
<evidence type="ECO:0000256" key="2">
    <source>
        <dbReference type="SAM" id="MobiDB-lite"/>
    </source>
</evidence>
<evidence type="ECO:0000305" key="3"/>
<reference key="1">
    <citation type="journal article" date="2001" name="Nature">
        <title>Genome sequence of enterohaemorrhagic Escherichia coli O157:H7.</title>
        <authorList>
            <person name="Perna N.T."/>
            <person name="Plunkett G. III"/>
            <person name="Burland V."/>
            <person name="Mau B."/>
            <person name="Glasner J.D."/>
            <person name="Rose D.J."/>
            <person name="Mayhew G.F."/>
            <person name="Evans P.S."/>
            <person name="Gregor J."/>
            <person name="Kirkpatrick H.A."/>
            <person name="Posfai G."/>
            <person name="Hackett J."/>
            <person name="Klink S."/>
            <person name="Boutin A."/>
            <person name="Shao Y."/>
            <person name="Miller L."/>
            <person name="Grotbeck E.J."/>
            <person name="Davis N.W."/>
            <person name="Lim A."/>
            <person name="Dimalanta E.T."/>
            <person name="Potamousis K."/>
            <person name="Apodaca J."/>
            <person name="Anantharaman T.S."/>
            <person name="Lin J."/>
            <person name="Yen G."/>
            <person name="Schwartz D.C."/>
            <person name="Welch R.A."/>
            <person name="Blattner F.R."/>
        </authorList>
    </citation>
    <scope>NUCLEOTIDE SEQUENCE [LARGE SCALE GENOMIC DNA]</scope>
    <source>
        <strain>O157:H7 / EDL933 / ATCC 700927 / EHEC</strain>
    </source>
</reference>
<reference key="2">
    <citation type="journal article" date="2001" name="DNA Res.">
        <title>Complete genome sequence of enterohemorrhagic Escherichia coli O157:H7 and genomic comparison with a laboratory strain K-12.</title>
        <authorList>
            <person name="Hayashi T."/>
            <person name="Makino K."/>
            <person name="Ohnishi M."/>
            <person name="Kurokawa K."/>
            <person name="Ishii K."/>
            <person name="Yokoyama K."/>
            <person name="Han C.-G."/>
            <person name="Ohtsubo E."/>
            <person name="Nakayama K."/>
            <person name="Murata T."/>
            <person name="Tanaka M."/>
            <person name="Tobe T."/>
            <person name="Iida T."/>
            <person name="Takami H."/>
            <person name="Honda T."/>
            <person name="Sasakawa C."/>
            <person name="Ogasawara N."/>
            <person name="Yasunaga T."/>
            <person name="Kuhara S."/>
            <person name="Shiba T."/>
            <person name="Hattori M."/>
            <person name="Shinagawa H."/>
        </authorList>
    </citation>
    <scope>NUCLEOTIDE SEQUENCE [LARGE SCALE GENOMIC DNA]</scope>
    <source>
        <strain>O157:H7 / Sakai / RIMD 0509952 / EHEC</strain>
    </source>
</reference>
<proteinExistence type="inferred from homology"/>
<comment type="function">
    <text evidence="1">Involved in mRNA degradation. Catalyzes the phosphorolysis of single-stranded polyribonucleotides processively in the 3'- to 5'-direction.</text>
</comment>
<comment type="catalytic activity">
    <reaction evidence="1">
        <text>RNA(n+1) + phosphate = RNA(n) + a ribonucleoside 5'-diphosphate</text>
        <dbReference type="Rhea" id="RHEA:22096"/>
        <dbReference type="Rhea" id="RHEA-COMP:14527"/>
        <dbReference type="Rhea" id="RHEA-COMP:17342"/>
        <dbReference type="ChEBI" id="CHEBI:43474"/>
        <dbReference type="ChEBI" id="CHEBI:57930"/>
        <dbReference type="ChEBI" id="CHEBI:140395"/>
        <dbReference type="EC" id="2.7.7.8"/>
    </reaction>
</comment>
<comment type="cofactor">
    <cofactor evidence="1">
        <name>Mg(2+)</name>
        <dbReference type="ChEBI" id="CHEBI:18420"/>
    </cofactor>
</comment>
<comment type="subunit">
    <text evidence="1">Component of the RNA degradosome, which is a multiprotein complex involved in RNA processing and mRNA degradation.</text>
</comment>
<comment type="subcellular location">
    <subcellularLocation>
        <location evidence="1">Cytoplasm</location>
    </subcellularLocation>
</comment>
<comment type="similarity">
    <text evidence="1">Belongs to the polyribonucleotide nucleotidyltransferase family.</text>
</comment>
<comment type="sequence caution" evidence="3">
    <conflict type="erroneous initiation">
        <sequence resource="EMBL-CDS" id="AAG58300"/>
    </conflict>
    <text>Extended N-terminus.</text>
</comment>
<gene>
    <name evidence="1" type="primary">pnp</name>
    <name type="ordered locus">Z4525</name>
    <name type="ordered locus">ECs4045</name>
</gene>
<feature type="chain" id="PRO_0000329641" description="Polyribonucleotide nucleotidyltransferase">
    <location>
        <begin position="1"/>
        <end position="711"/>
    </location>
</feature>
<feature type="domain" description="KH" evidence="1">
    <location>
        <begin position="553"/>
        <end position="612"/>
    </location>
</feature>
<feature type="domain" description="S1 motif" evidence="1">
    <location>
        <begin position="622"/>
        <end position="690"/>
    </location>
</feature>
<feature type="region of interest" description="Disordered" evidence="2">
    <location>
        <begin position="689"/>
        <end position="711"/>
    </location>
</feature>
<feature type="compositionally biased region" description="Low complexity" evidence="2">
    <location>
        <begin position="694"/>
        <end position="711"/>
    </location>
</feature>
<feature type="binding site" evidence="1">
    <location>
        <position position="486"/>
    </location>
    <ligand>
        <name>Mg(2+)</name>
        <dbReference type="ChEBI" id="CHEBI:18420"/>
    </ligand>
</feature>
<feature type="binding site" evidence="1">
    <location>
        <position position="492"/>
    </location>
    <ligand>
        <name>Mg(2+)</name>
        <dbReference type="ChEBI" id="CHEBI:18420"/>
    </ligand>
</feature>
<keyword id="KW-0963">Cytoplasm</keyword>
<keyword id="KW-0460">Magnesium</keyword>
<keyword id="KW-0479">Metal-binding</keyword>
<keyword id="KW-0548">Nucleotidyltransferase</keyword>
<keyword id="KW-1185">Reference proteome</keyword>
<keyword id="KW-0694">RNA-binding</keyword>
<keyword id="KW-0808">Transferase</keyword>
<accession>Q8X9M3</accession>
<accession>Q7AAI4</accession>
<protein>
    <recommendedName>
        <fullName evidence="1">Polyribonucleotide nucleotidyltransferase</fullName>
        <ecNumber evidence="1">2.7.7.8</ecNumber>
    </recommendedName>
    <alternativeName>
        <fullName evidence="1">Polynucleotide phosphorylase</fullName>
        <shortName evidence="1">PNPase</shortName>
    </alternativeName>
</protein>
<name>PNP_ECO57</name>
<organism>
    <name type="scientific">Escherichia coli O157:H7</name>
    <dbReference type="NCBI Taxonomy" id="83334"/>
    <lineage>
        <taxon>Bacteria</taxon>
        <taxon>Pseudomonadati</taxon>
        <taxon>Pseudomonadota</taxon>
        <taxon>Gammaproteobacteria</taxon>
        <taxon>Enterobacterales</taxon>
        <taxon>Enterobacteriaceae</taxon>
        <taxon>Escherichia</taxon>
    </lineage>
</organism>
<dbReference type="EC" id="2.7.7.8" evidence="1"/>
<dbReference type="EMBL" id="AE005174">
    <property type="protein sequence ID" value="AAG58300.1"/>
    <property type="status" value="ALT_INIT"/>
    <property type="molecule type" value="Genomic_DNA"/>
</dbReference>
<dbReference type="EMBL" id="BA000007">
    <property type="protein sequence ID" value="BAB37468.2"/>
    <property type="molecule type" value="Genomic_DNA"/>
</dbReference>
<dbReference type="PIR" id="E91134">
    <property type="entry name" value="E91134"/>
</dbReference>
<dbReference type="PIR" id="H85979">
    <property type="entry name" value="H85979"/>
</dbReference>
<dbReference type="RefSeq" id="NP_312072.2">
    <property type="nucleotide sequence ID" value="NC_002695.1"/>
</dbReference>
<dbReference type="RefSeq" id="WP_001298740.1">
    <property type="nucleotide sequence ID" value="NZ_VOAI01000014.1"/>
</dbReference>
<dbReference type="SMR" id="Q8X9M3"/>
<dbReference type="STRING" id="155864.Z4525"/>
<dbReference type="GeneID" id="916115"/>
<dbReference type="GeneID" id="93778819"/>
<dbReference type="KEGG" id="ece:Z4525"/>
<dbReference type="KEGG" id="ecs:ECs_4045"/>
<dbReference type="PATRIC" id="fig|386585.9.peg.4224"/>
<dbReference type="eggNOG" id="COG1185">
    <property type="taxonomic scope" value="Bacteria"/>
</dbReference>
<dbReference type="HOGENOM" id="CLU_004217_2_2_6"/>
<dbReference type="OMA" id="RFMFHYN"/>
<dbReference type="Proteomes" id="UP000000558">
    <property type="component" value="Chromosome"/>
</dbReference>
<dbReference type="Proteomes" id="UP000002519">
    <property type="component" value="Chromosome"/>
</dbReference>
<dbReference type="GO" id="GO:0005829">
    <property type="term" value="C:cytosol"/>
    <property type="evidence" value="ECO:0007669"/>
    <property type="project" value="TreeGrafter"/>
</dbReference>
<dbReference type="GO" id="GO:0000175">
    <property type="term" value="F:3'-5'-RNA exonuclease activity"/>
    <property type="evidence" value="ECO:0007669"/>
    <property type="project" value="TreeGrafter"/>
</dbReference>
<dbReference type="GO" id="GO:0000287">
    <property type="term" value="F:magnesium ion binding"/>
    <property type="evidence" value="ECO:0007669"/>
    <property type="project" value="UniProtKB-UniRule"/>
</dbReference>
<dbReference type="GO" id="GO:0004654">
    <property type="term" value="F:polyribonucleotide nucleotidyltransferase activity"/>
    <property type="evidence" value="ECO:0007669"/>
    <property type="project" value="UniProtKB-UniRule"/>
</dbReference>
<dbReference type="GO" id="GO:0003723">
    <property type="term" value="F:RNA binding"/>
    <property type="evidence" value="ECO:0007669"/>
    <property type="project" value="UniProtKB-UniRule"/>
</dbReference>
<dbReference type="GO" id="GO:0006402">
    <property type="term" value="P:mRNA catabolic process"/>
    <property type="evidence" value="ECO:0007669"/>
    <property type="project" value="UniProtKB-UniRule"/>
</dbReference>
<dbReference type="GO" id="GO:0006396">
    <property type="term" value="P:RNA processing"/>
    <property type="evidence" value="ECO:0007669"/>
    <property type="project" value="InterPro"/>
</dbReference>
<dbReference type="CDD" id="cd02393">
    <property type="entry name" value="KH-I_PNPase"/>
    <property type="match status" value="1"/>
</dbReference>
<dbReference type="CDD" id="cd11363">
    <property type="entry name" value="RNase_PH_PNPase_1"/>
    <property type="match status" value="1"/>
</dbReference>
<dbReference type="CDD" id="cd11364">
    <property type="entry name" value="RNase_PH_PNPase_2"/>
    <property type="match status" value="1"/>
</dbReference>
<dbReference type="CDD" id="cd04472">
    <property type="entry name" value="S1_PNPase"/>
    <property type="match status" value="1"/>
</dbReference>
<dbReference type="FunFam" id="2.40.50.140:FF:000023">
    <property type="entry name" value="Polyribonucleotide nucleotidyltransferase"/>
    <property type="match status" value="1"/>
</dbReference>
<dbReference type="FunFam" id="3.30.1370.10:FF:000001">
    <property type="entry name" value="Polyribonucleotide nucleotidyltransferase"/>
    <property type="match status" value="1"/>
</dbReference>
<dbReference type="FunFam" id="3.30.230.70:FF:000001">
    <property type="entry name" value="Polyribonucleotide nucleotidyltransferase"/>
    <property type="match status" value="1"/>
</dbReference>
<dbReference type="FunFam" id="3.30.230.70:FF:000002">
    <property type="entry name" value="Polyribonucleotide nucleotidyltransferase"/>
    <property type="match status" value="1"/>
</dbReference>
<dbReference type="Gene3D" id="3.30.230.70">
    <property type="entry name" value="GHMP Kinase, N-terminal domain"/>
    <property type="match status" value="2"/>
</dbReference>
<dbReference type="Gene3D" id="3.30.1370.10">
    <property type="entry name" value="K Homology domain, type 1"/>
    <property type="match status" value="1"/>
</dbReference>
<dbReference type="Gene3D" id="2.40.50.140">
    <property type="entry name" value="Nucleic acid-binding proteins"/>
    <property type="match status" value="1"/>
</dbReference>
<dbReference type="HAMAP" id="MF_01595">
    <property type="entry name" value="PNPase"/>
    <property type="match status" value="1"/>
</dbReference>
<dbReference type="InterPro" id="IPR001247">
    <property type="entry name" value="ExoRNase_PH_dom1"/>
</dbReference>
<dbReference type="InterPro" id="IPR015847">
    <property type="entry name" value="ExoRNase_PH_dom2"/>
</dbReference>
<dbReference type="InterPro" id="IPR036345">
    <property type="entry name" value="ExoRNase_PH_dom2_sf"/>
</dbReference>
<dbReference type="InterPro" id="IPR004087">
    <property type="entry name" value="KH_dom"/>
</dbReference>
<dbReference type="InterPro" id="IPR004088">
    <property type="entry name" value="KH_dom_type_1"/>
</dbReference>
<dbReference type="InterPro" id="IPR036612">
    <property type="entry name" value="KH_dom_type_1_sf"/>
</dbReference>
<dbReference type="InterPro" id="IPR012340">
    <property type="entry name" value="NA-bd_OB-fold"/>
</dbReference>
<dbReference type="InterPro" id="IPR012162">
    <property type="entry name" value="PNPase"/>
</dbReference>
<dbReference type="InterPro" id="IPR027408">
    <property type="entry name" value="PNPase/RNase_PH_dom_sf"/>
</dbReference>
<dbReference type="InterPro" id="IPR015848">
    <property type="entry name" value="PNPase_PH_RNA-bd_bac/org-type"/>
</dbReference>
<dbReference type="InterPro" id="IPR036456">
    <property type="entry name" value="PNPase_PH_RNA-bd_sf"/>
</dbReference>
<dbReference type="InterPro" id="IPR020568">
    <property type="entry name" value="Ribosomal_Su5_D2-typ_SF"/>
</dbReference>
<dbReference type="InterPro" id="IPR003029">
    <property type="entry name" value="S1_domain"/>
</dbReference>
<dbReference type="NCBIfam" id="TIGR03591">
    <property type="entry name" value="polynuc_phos"/>
    <property type="match status" value="1"/>
</dbReference>
<dbReference type="NCBIfam" id="NF008805">
    <property type="entry name" value="PRK11824.1"/>
    <property type="match status" value="1"/>
</dbReference>
<dbReference type="PANTHER" id="PTHR11252">
    <property type="entry name" value="POLYRIBONUCLEOTIDE NUCLEOTIDYLTRANSFERASE"/>
    <property type="match status" value="1"/>
</dbReference>
<dbReference type="PANTHER" id="PTHR11252:SF0">
    <property type="entry name" value="POLYRIBONUCLEOTIDE NUCLEOTIDYLTRANSFERASE 1, MITOCHONDRIAL"/>
    <property type="match status" value="1"/>
</dbReference>
<dbReference type="Pfam" id="PF00013">
    <property type="entry name" value="KH_1"/>
    <property type="match status" value="1"/>
</dbReference>
<dbReference type="Pfam" id="PF03726">
    <property type="entry name" value="PNPase"/>
    <property type="match status" value="1"/>
</dbReference>
<dbReference type="Pfam" id="PF01138">
    <property type="entry name" value="RNase_PH"/>
    <property type="match status" value="2"/>
</dbReference>
<dbReference type="Pfam" id="PF03725">
    <property type="entry name" value="RNase_PH_C"/>
    <property type="match status" value="2"/>
</dbReference>
<dbReference type="Pfam" id="PF00575">
    <property type="entry name" value="S1"/>
    <property type="match status" value="1"/>
</dbReference>
<dbReference type="PIRSF" id="PIRSF005499">
    <property type="entry name" value="PNPase"/>
    <property type="match status" value="1"/>
</dbReference>
<dbReference type="SMART" id="SM00322">
    <property type="entry name" value="KH"/>
    <property type="match status" value="1"/>
</dbReference>
<dbReference type="SMART" id="SM00316">
    <property type="entry name" value="S1"/>
    <property type="match status" value="1"/>
</dbReference>
<dbReference type="SUPFAM" id="SSF54791">
    <property type="entry name" value="Eukaryotic type KH-domain (KH-domain type I)"/>
    <property type="match status" value="1"/>
</dbReference>
<dbReference type="SUPFAM" id="SSF50249">
    <property type="entry name" value="Nucleic acid-binding proteins"/>
    <property type="match status" value="1"/>
</dbReference>
<dbReference type="SUPFAM" id="SSF46915">
    <property type="entry name" value="Polynucleotide phosphorylase/guanosine pentaphosphate synthase (PNPase/GPSI), domain 3"/>
    <property type="match status" value="1"/>
</dbReference>
<dbReference type="SUPFAM" id="SSF55666">
    <property type="entry name" value="Ribonuclease PH domain 2-like"/>
    <property type="match status" value="2"/>
</dbReference>
<dbReference type="SUPFAM" id="SSF54211">
    <property type="entry name" value="Ribosomal protein S5 domain 2-like"/>
    <property type="match status" value="2"/>
</dbReference>
<dbReference type="PROSITE" id="PS50084">
    <property type="entry name" value="KH_TYPE_1"/>
    <property type="match status" value="1"/>
</dbReference>
<dbReference type="PROSITE" id="PS50126">
    <property type="entry name" value="S1"/>
    <property type="match status" value="1"/>
</dbReference>